<sequence length="87" mass="9198">MADGFDIHIDQEQAARLKVVADRLGMSVSEYAVALIDAGLTGAAPKAIDPDPAIDEAIADAIERGDEPAISRDEFRAHIRRVTAGLG</sequence>
<proteinExistence type="evidence at protein level"/>
<organism>
    <name type="scientific">Caulobacter vibrioides (strain ATCC 19089 / CIP 103742 / CB 15)</name>
    <name type="common">Caulobacter crescentus</name>
    <dbReference type="NCBI Taxonomy" id="190650"/>
    <lineage>
        <taxon>Bacteria</taxon>
        <taxon>Pseudomonadati</taxon>
        <taxon>Pseudomonadota</taxon>
        <taxon>Alphaproteobacteria</taxon>
        <taxon>Caulobacterales</taxon>
        <taxon>Caulobacteraceae</taxon>
        <taxon>Caulobacter</taxon>
    </lineage>
</organism>
<gene>
    <name type="primary">relB1</name>
    <name type="ordered locus">CC_0803</name>
</gene>
<name>RELB1_CAUVC</name>
<feature type="chain" id="PRO_0000408464" description="Antitoxin RelB1">
    <location>
        <begin position="1"/>
        <end position="87"/>
    </location>
</feature>
<reference key="1">
    <citation type="journal article" date="2001" name="Proc. Natl. Acad. Sci. U.S.A.">
        <title>Complete genome sequence of Caulobacter crescentus.</title>
        <authorList>
            <person name="Nierman W.C."/>
            <person name="Feldblyum T.V."/>
            <person name="Laub M.T."/>
            <person name="Paulsen I.T."/>
            <person name="Nelson K.E."/>
            <person name="Eisen J.A."/>
            <person name="Heidelberg J.F."/>
            <person name="Alley M.R.K."/>
            <person name="Ohta N."/>
            <person name="Maddock J.R."/>
            <person name="Potocka I."/>
            <person name="Nelson W.C."/>
            <person name="Newton A."/>
            <person name="Stephens C."/>
            <person name="Phadke N.D."/>
            <person name="Ely B."/>
            <person name="DeBoy R.T."/>
            <person name="Dodson R.J."/>
            <person name="Durkin A.S."/>
            <person name="Gwinn M.L."/>
            <person name="Haft D.H."/>
            <person name="Kolonay J.F."/>
            <person name="Smit J."/>
            <person name="Craven M.B."/>
            <person name="Khouri H.M."/>
            <person name="Shetty J."/>
            <person name="Berry K.J."/>
            <person name="Utterback T.R."/>
            <person name="Tran K."/>
            <person name="Wolf A.M."/>
            <person name="Vamathevan J.J."/>
            <person name="Ermolaeva M.D."/>
            <person name="White O."/>
            <person name="Salzberg S.L."/>
            <person name="Venter J.C."/>
            <person name="Shapiro L."/>
            <person name="Fraser C.M."/>
        </authorList>
    </citation>
    <scope>NUCLEOTIDE SEQUENCE [LARGE SCALE GENOMIC DNA]</scope>
    <source>
        <strain>ATCC 19089 / CIP 103742 / CB 15</strain>
    </source>
</reference>
<reference key="2">
    <citation type="journal article" date="2005" name="Nucleic Acids Res.">
        <title>Toxin-antitoxin loci are highly abundant in free-living but lost from host-associated prokaryotes.</title>
        <authorList>
            <person name="Pandey D.P."/>
            <person name="Gerdes K."/>
        </authorList>
    </citation>
    <scope>POSSIBLE FUNCTION</scope>
    <source>
        <strain>ATCC 19089 / CIP 103742 / CB 15</strain>
    </source>
</reference>
<reference key="3">
    <citation type="journal article" date="2010" name="Mol. Microbiol.">
        <title>Interaction specificity, toxicity and regulation of a paralogous set of ParE/RelE-family toxin-antitoxin systems.</title>
        <authorList>
            <person name="Fiebig A."/>
            <person name="Castro Rojas C.M."/>
            <person name="Siegal-Gaskins D."/>
            <person name="Crosson S."/>
        </authorList>
    </citation>
    <scope>FUNCTION AS AN ANTITOXIN</scope>
    <scope>DISRUPTION PHENOTYPE</scope>
    <source>
        <strain>ATCC 19089 / CIP 103742 / CB 15</strain>
    </source>
</reference>
<keyword id="KW-1185">Reference proteome</keyword>
<keyword id="KW-1277">Toxin-antitoxin system</keyword>
<accession>Q9AA08</accession>
<protein>
    <recommendedName>
        <fullName>Antitoxin RelB1</fullName>
    </recommendedName>
</protein>
<dbReference type="EMBL" id="AE005673">
    <property type="protein sequence ID" value="AAK22788.1"/>
    <property type="molecule type" value="Genomic_DNA"/>
</dbReference>
<dbReference type="PIR" id="H87348">
    <property type="entry name" value="H87348"/>
</dbReference>
<dbReference type="RefSeq" id="NP_419620.1">
    <property type="nucleotide sequence ID" value="NC_002696.2"/>
</dbReference>
<dbReference type="RefSeq" id="WP_010918688.1">
    <property type="nucleotide sequence ID" value="NC_002696.2"/>
</dbReference>
<dbReference type="SMR" id="Q9AA08"/>
<dbReference type="STRING" id="190650.CC_0803"/>
<dbReference type="EnsemblBacteria" id="AAK22788">
    <property type="protein sequence ID" value="AAK22788"/>
    <property type="gene ID" value="CC_0803"/>
</dbReference>
<dbReference type="KEGG" id="ccr:CC_0803"/>
<dbReference type="PATRIC" id="fig|190650.5.peg.815"/>
<dbReference type="HOGENOM" id="CLU_2477681_0_0_5"/>
<dbReference type="BioCyc" id="CAULO:CC0803-MONOMER"/>
<dbReference type="Proteomes" id="UP000001816">
    <property type="component" value="Chromosome"/>
</dbReference>
<evidence type="ECO:0000269" key="1">
    <source>
    </source>
</evidence>
<comment type="function">
    <text evidence="1">Antitoxin component of a type II toxin-antitoxin (TA) system. Neutralizes the effect of cognate toxin RelE1, but no other RelE or ParE toxin.</text>
</comment>
<comment type="disruption phenotype">
    <text evidence="1">Cannot be disrupted, suggesting it is a functional antitoxin. No visible phenotype when the relBE1 operon is deleted.</text>
</comment>